<gene>
    <name evidence="1" type="primary">rpsB</name>
    <name type="ordered locus">PBPRA2968</name>
</gene>
<dbReference type="EMBL" id="CR378672">
    <property type="protein sequence ID" value="CAG21302.1"/>
    <property type="molecule type" value="Genomic_DNA"/>
</dbReference>
<dbReference type="RefSeq" id="WP_011219569.1">
    <property type="nucleotide sequence ID" value="NC_006370.1"/>
</dbReference>
<dbReference type="SMR" id="Q6LN24"/>
<dbReference type="STRING" id="298386.PBPRA2968"/>
<dbReference type="KEGG" id="ppr:PBPRA2968"/>
<dbReference type="eggNOG" id="COG0052">
    <property type="taxonomic scope" value="Bacteria"/>
</dbReference>
<dbReference type="HOGENOM" id="CLU_040318_1_2_6"/>
<dbReference type="Proteomes" id="UP000000593">
    <property type="component" value="Chromosome 1"/>
</dbReference>
<dbReference type="GO" id="GO:0022627">
    <property type="term" value="C:cytosolic small ribosomal subunit"/>
    <property type="evidence" value="ECO:0007669"/>
    <property type="project" value="TreeGrafter"/>
</dbReference>
<dbReference type="GO" id="GO:0003735">
    <property type="term" value="F:structural constituent of ribosome"/>
    <property type="evidence" value="ECO:0007669"/>
    <property type="project" value="InterPro"/>
</dbReference>
<dbReference type="GO" id="GO:0006412">
    <property type="term" value="P:translation"/>
    <property type="evidence" value="ECO:0007669"/>
    <property type="project" value="UniProtKB-UniRule"/>
</dbReference>
<dbReference type="CDD" id="cd01425">
    <property type="entry name" value="RPS2"/>
    <property type="match status" value="1"/>
</dbReference>
<dbReference type="FunFam" id="1.10.287.610:FF:000001">
    <property type="entry name" value="30S ribosomal protein S2"/>
    <property type="match status" value="1"/>
</dbReference>
<dbReference type="Gene3D" id="3.40.50.10490">
    <property type="entry name" value="Glucose-6-phosphate isomerase like protein, domain 1"/>
    <property type="match status" value="1"/>
</dbReference>
<dbReference type="Gene3D" id="1.10.287.610">
    <property type="entry name" value="Helix hairpin bin"/>
    <property type="match status" value="1"/>
</dbReference>
<dbReference type="HAMAP" id="MF_00291_B">
    <property type="entry name" value="Ribosomal_uS2_B"/>
    <property type="match status" value="1"/>
</dbReference>
<dbReference type="InterPro" id="IPR001865">
    <property type="entry name" value="Ribosomal_uS2"/>
</dbReference>
<dbReference type="InterPro" id="IPR005706">
    <property type="entry name" value="Ribosomal_uS2_bac/mit/plastid"/>
</dbReference>
<dbReference type="InterPro" id="IPR018130">
    <property type="entry name" value="Ribosomal_uS2_CS"/>
</dbReference>
<dbReference type="InterPro" id="IPR023591">
    <property type="entry name" value="Ribosomal_uS2_flav_dom_sf"/>
</dbReference>
<dbReference type="NCBIfam" id="TIGR01011">
    <property type="entry name" value="rpsB_bact"/>
    <property type="match status" value="1"/>
</dbReference>
<dbReference type="PANTHER" id="PTHR12534">
    <property type="entry name" value="30S RIBOSOMAL PROTEIN S2 PROKARYOTIC AND ORGANELLAR"/>
    <property type="match status" value="1"/>
</dbReference>
<dbReference type="PANTHER" id="PTHR12534:SF0">
    <property type="entry name" value="SMALL RIBOSOMAL SUBUNIT PROTEIN US2M"/>
    <property type="match status" value="1"/>
</dbReference>
<dbReference type="Pfam" id="PF00318">
    <property type="entry name" value="Ribosomal_S2"/>
    <property type="match status" value="1"/>
</dbReference>
<dbReference type="PRINTS" id="PR00395">
    <property type="entry name" value="RIBOSOMALS2"/>
</dbReference>
<dbReference type="SUPFAM" id="SSF52313">
    <property type="entry name" value="Ribosomal protein S2"/>
    <property type="match status" value="1"/>
</dbReference>
<dbReference type="PROSITE" id="PS00962">
    <property type="entry name" value="RIBOSOMAL_S2_1"/>
    <property type="match status" value="1"/>
</dbReference>
<dbReference type="PROSITE" id="PS00963">
    <property type="entry name" value="RIBOSOMAL_S2_2"/>
    <property type="match status" value="1"/>
</dbReference>
<keyword id="KW-1185">Reference proteome</keyword>
<keyword id="KW-0687">Ribonucleoprotein</keyword>
<keyword id="KW-0689">Ribosomal protein</keyword>
<comment type="similarity">
    <text evidence="1">Belongs to the universal ribosomal protein uS2 family.</text>
</comment>
<proteinExistence type="inferred from homology"/>
<sequence>MATVSMRDMLKAGVHFGHQTRYWNPKMKPFIFGARNKVHIINLEKTVPMFNDALAEINKIAARKGKVLFVGTKRAASESVKESAISCDQYYVNNRWLGGMLTNWKTVRQSIKRLKELEIQSADGTFEKLTKKEALMRTREMEKLEKSLGGIKNMGGLPDAMFVIDADHEHIAIKEANNLGIPVFSIVDTNSNPDGVDFVIPGNDDAIRSIQLYTGAVAQTVTEARNQDIVVQAEQDGFVAEA</sequence>
<reference key="1">
    <citation type="journal article" date="2005" name="Science">
        <title>Life at depth: Photobacterium profundum genome sequence and expression analysis.</title>
        <authorList>
            <person name="Vezzi A."/>
            <person name="Campanaro S."/>
            <person name="D'Angelo M."/>
            <person name="Simonato F."/>
            <person name="Vitulo N."/>
            <person name="Lauro F.M."/>
            <person name="Cestaro A."/>
            <person name="Malacrida G."/>
            <person name="Simionati B."/>
            <person name="Cannata N."/>
            <person name="Romualdi C."/>
            <person name="Bartlett D.H."/>
            <person name="Valle G."/>
        </authorList>
    </citation>
    <scope>NUCLEOTIDE SEQUENCE [LARGE SCALE GENOMIC DNA]</scope>
    <source>
        <strain>ATCC BAA-1253 / SS9</strain>
    </source>
</reference>
<feature type="chain" id="PRO_0000134214" description="Small ribosomal subunit protein uS2">
    <location>
        <begin position="1"/>
        <end position="242"/>
    </location>
</feature>
<evidence type="ECO:0000255" key="1">
    <source>
        <dbReference type="HAMAP-Rule" id="MF_00291"/>
    </source>
</evidence>
<evidence type="ECO:0000305" key="2"/>
<accession>Q6LN24</accession>
<name>RS2_PHOPR</name>
<organism>
    <name type="scientific">Photobacterium profundum (strain SS9)</name>
    <dbReference type="NCBI Taxonomy" id="298386"/>
    <lineage>
        <taxon>Bacteria</taxon>
        <taxon>Pseudomonadati</taxon>
        <taxon>Pseudomonadota</taxon>
        <taxon>Gammaproteobacteria</taxon>
        <taxon>Vibrionales</taxon>
        <taxon>Vibrionaceae</taxon>
        <taxon>Photobacterium</taxon>
    </lineage>
</organism>
<protein>
    <recommendedName>
        <fullName evidence="1">Small ribosomal subunit protein uS2</fullName>
    </recommendedName>
    <alternativeName>
        <fullName evidence="2">30S ribosomal protein S2</fullName>
    </alternativeName>
</protein>